<feature type="chain" id="PRO_1000096443" description="dCTP deaminase">
    <location>
        <begin position="1"/>
        <end position="188"/>
    </location>
</feature>
<feature type="active site" description="Proton donor/acceptor" evidence="1">
    <location>
        <position position="137"/>
    </location>
</feature>
<feature type="binding site" evidence="1">
    <location>
        <begin position="111"/>
        <end position="116"/>
    </location>
    <ligand>
        <name>dCTP</name>
        <dbReference type="ChEBI" id="CHEBI:61481"/>
    </ligand>
</feature>
<feature type="binding site" evidence="1">
    <location>
        <begin position="135"/>
        <end position="137"/>
    </location>
    <ligand>
        <name>dCTP</name>
        <dbReference type="ChEBI" id="CHEBI:61481"/>
    </ligand>
</feature>
<feature type="binding site" evidence="1">
    <location>
        <position position="156"/>
    </location>
    <ligand>
        <name>dCTP</name>
        <dbReference type="ChEBI" id="CHEBI:61481"/>
    </ligand>
</feature>
<feature type="binding site" evidence="1">
    <location>
        <position position="170"/>
    </location>
    <ligand>
        <name>dCTP</name>
        <dbReference type="ChEBI" id="CHEBI:61481"/>
    </ligand>
</feature>
<feature type="binding site" evidence="1">
    <location>
        <position position="180"/>
    </location>
    <ligand>
        <name>dCTP</name>
        <dbReference type="ChEBI" id="CHEBI:61481"/>
    </ligand>
</feature>
<dbReference type="EC" id="3.5.4.13" evidence="1"/>
<dbReference type="EMBL" id="CP000949">
    <property type="protein sequence ID" value="ACA71634.1"/>
    <property type="molecule type" value="Genomic_DNA"/>
</dbReference>
<dbReference type="SMR" id="B1J1A3"/>
<dbReference type="STRING" id="390235.PputW619_1129"/>
<dbReference type="KEGG" id="ppw:PputW619_1129"/>
<dbReference type="eggNOG" id="COG0717">
    <property type="taxonomic scope" value="Bacteria"/>
</dbReference>
<dbReference type="HOGENOM" id="CLU_087476_4_0_6"/>
<dbReference type="OrthoDB" id="9780956at2"/>
<dbReference type="UniPathway" id="UPA00610">
    <property type="reaction ID" value="UER00665"/>
</dbReference>
<dbReference type="GO" id="GO:0008829">
    <property type="term" value="F:dCTP deaminase activity"/>
    <property type="evidence" value="ECO:0007669"/>
    <property type="project" value="UniProtKB-UniRule"/>
</dbReference>
<dbReference type="GO" id="GO:0000166">
    <property type="term" value="F:nucleotide binding"/>
    <property type="evidence" value="ECO:0007669"/>
    <property type="project" value="UniProtKB-KW"/>
</dbReference>
<dbReference type="GO" id="GO:0006226">
    <property type="term" value="P:dUMP biosynthetic process"/>
    <property type="evidence" value="ECO:0007669"/>
    <property type="project" value="UniProtKB-UniPathway"/>
</dbReference>
<dbReference type="GO" id="GO:0006229">
    <property type="term" value="P:dUTP biosynthetic process"/>
    <property type="evidence" value="ECO:0007669"/>
    <property type="project" value="UniProtKB-UniRule"/>
</dbReference>
<dbReference type="GO" id="GO:0015949">
    <property type="term" value="P:nucleobase-containing small molecule interconversion"/>
    <property type="evidence" value="ECO:0007669"/>
    <property type="project" value="TreeGrafter"/>
</dbReference>
<dbReference type="CDD" id="cd07557">
    <property type="entry name" value="trimeric_dUTPase"/>
    <property type="match status" value="1"/>
</dbReference>
<dbReference type="FunFam" id="2.70.40.10:FF:000001">
    <property type="entry name" value="dCTP deaminase"/>
    <property type="match status" value="1"/>
</dbReference>
<dbReference type="Gene3D" id="2.70.40.10">
    <property type="match status" value="1"/>
</dbReference>
<dbReference type="HAMAP" id="MF_00146">
    <property type="entry name" value="dCTP_deaminase"/>
    <property type="match status" value="1"/>
</dbReference>
<dbReference type="InterPro" id="IPR011962">
    <property type="entry name" value="dCTP_deaminase"/>
</dbReference>
<dbReference type="InterPro" id="IPR036157">
    <property type="entry name" value="dUTPase-like_sf"/>
</dbReference>
<dbReference type="InterPro" id="IPR033704">
    <property type="entry name" value="dUTPase_trimeric"/>
</dbReference>
<dbReference type="NCBIfam" id="TIGR02274">
    <property type="entry name" value="dCTP_deam"/>
    <property type="match status" value="1"/>
</dbReference>
<dbReference type="PANTHER" id="PTHR42680">
    <property type="entry name" value="DCTP DEAMINASE"/>
    <property type="match status" value="1"/>
</dbReference>
<dbReference type="PANTHER" id="PTHR42680:SF3">
    <property type="entry name" value="DCTP DEAMINASE"/>
    <property type="match status" value="1"/>
</dbReference>
<dbReference type="Pfam" id="PF22769">
    <property type="entry name" value="DCD"/>
    <property type="match status" value="1"/>
</dbReference>
<dbReference type="SUPFAM" id="SSF51283">
    <property type="entry name" value="dUTPase-like"/>
    <property type="match status" value="1"/>
</dbReference>
<reference key="1">
    <citation type="submission" date="2008-02" db="EMBL/GenBank/DDBJ databases">
        <title>Complete sequence of Pseudomonas putida W619.</title>
        <authorList>
            <person name="Copeland A."/>
            <person name="Lucas S."/>
            <person name="Lapidus A."/>
            <person name="Barry K."/>
            <person name="Detter J.C."/>
            <person name="Glavina del Rio T."/>
            <person name="Dalin E."/>
            <person name="Tice H."/>
            <person name="Pitluck S."/>
            <person name="Chain P."/>
            <person name="Malfatti S."/>
            <person name="Shin M."/>
            <person name="Vergez L."/>
            <person name="Schmutz J."/>
            <person name="Larimer F."/>
            <person name="Land M."/>
            <person name="Hauser L."/>
            <person name="Kyrpides N."/>
            <person name="Kim E."/>
            <person name="Taghavi S."/>
            <person name="Vangronsveld D."/>
            <person name="van der Lelie D."/>
            <person name="Richardson P."/>
        </authorList>
    </citation>
    <scope>NUCLEOTIDE SEQUENCE [LARGE SCALE GENOMIC DNA]</scope>
    <source>
        <strain>W619</strain>
    </source>
</reference>
<protein>
    <recommendedName>
        <fullName evidence="1">dCTP deaminase</fullName>
        <ecNumber evidence="1">3.5.4.13</ecNumber>
    </recommendedName>
    <alternativeName>
        <fullName evidence="1">Deoxycytidine triphosphate deaminase</fullName>
    </alternativeName>
</protein>
<evidence type="ECO:0000255" key="1">
    <source>
        <dbReference type="HAMAP-Rule" id="MF_00146"/>
    </source>
</evidence>
<organism>
    <name type="scientific">Pseudomonas putida (strain W619)</name>
    <dbReference type="NCBI Taxonomy" id="390235"/>
    <lineage>
        <taxon>Bacteria</taxon>
        <taxon>Pseudomonadati</taxon>
        <taxon>Pseudomonadota</taxon>
        <taxon>Gammaproteobacteria</taxon>
        <taxon>Pseudomonadales</taxon>
        <taxon>Pseudomonadaceae</taxon>
        <taxon>Pseudomonas</taxon>
    </lineage>
</organism>
<gene>
    <name evidence="1" type="primary">dcd</name>
    <name type="ordered locus">PputW619_1129</name>
</gene>
<keyword id="KW-0378">Hydrolase</keyword>
<keyword id="KW-0546">Nucleotide metabolism</keyword>
<keyword id="KW-0547">Nucleotide-binding</keyword>
<proteinExistence type="inferred from homology"/>
<sequence length="188" mass="21201">MSIKSDKWIRRMAQEHGMIEPFVERQVRGEHDSRVISFGVSSYGYDVRCADEFKVFTNINSATVDPKNFDAGSFVDVKSDVCIIPPNSFALARTVEYFRIPRNVLTICLGKSTYARCGIIVNVTPLEPEWEGHVTLEFSNTTTLPAKIYANEGVAQMLFLESDEECEVSYKDRGGKYQGQRGVTLPRT</sequence>
<accession>B1J1A3</accession>
<comment type="function">
    <text evidence="1">Catalyzes the deamination of dCTP to dUTP.</text>
</comment>
<comment type="catalytic activity">
    <reaction evidence="1">
        <text>dCTP + H2O + H(+) = dUTP + NH4(+)</text>
        <dbReference type="Rhea" id="RHEA:22680"/>
        <dbReference type="ChEBI" id="CHEBI:15377"/>
        <dbReference type="ChEBI" id="CHEBI:15378"/>
        <dbReference type="ChEBI" id="CHEBI:28938"/>
        <dbReference type="ChEBI" id="CHEBI:61481"/>
        <dbReference type="ChEBI" id="CHEBI:61555"/>
        <dbReference type="EC" id="3.5.4.13"/>
    </reaction>
</comment>
<comment type="pathway">
    <text evidence="1">Pyrimidine metabolism; dUMP biosynthesis; dUMP from dCTP (dUTP route): step 1/2.</text>
</comment>
<comment type="subunit">
    <text evidence="1">Homotrimer.</text>
</comment>
<comment type="similarity">
    <text evidence="1">Belongs to the dCTP deaminase family.</text>
</comment>
<name>DCD_PSEPW</name>